<proteinExistence type="inferred from homology"/>
<organism>
    <name type="scientific">Mycobacterium marinum (strain ATCC BAA-535 / M)</name>
    <dbReference type="NCBI Taxonomy" id="216594"/>
    <lineage>
        <taxon>Bacteria</taxon>
        <taxon>Bacillati</taxon>
        <taxon>Actinomycetota</taxon>
        <taxon>Actinomycetes</taxon>
        <taxon>Mycobacteriales</taxon>
        <taxon>Mycobacteriaceae</taxon>
        <taxon>Mycobacterium</taxon>
        <taxon>Mycobacterium ulcerans group</taxon>
    </lineage>
</organism>
<evidence type="ECO:0000255" key="1">
    <source>
        <dbReference type="HAMAP-Rule" id="MF_01337"/>
    </source>
</evidence>
<evidence type="ECO:0000256" key="2">
    <source>
        <dbReference type="SAM" id="MobiDB-lite"/>
    </source>
</evidence>
<evidence type="ECO:0000305" key="3"/>
<reference key="1">
    <citation type="journal article" date="2008" name="Genome Res.">
        <title>Insights from the complete genome sequence of Mycobacterium marinum on the evolution of Mycobacterium tuberculosis.</title>
        <authorList>
            <person name="Stinear T.P."/>
            <person name="Seemann T."/>
            <person name="Harrison P.F."/>
            <person name="Jenkin G.A."/>
            <person name="Davies J.K."/>
            <person name="Johnson P.D."/>
            <person name="Abdellah Z."/>
            <person name="Arrowsmith C."/>
            <person name="Chillingworth T."/>
            <person name="Churcher C."/>
            <person name="Clarke K."/>
            <person name="Cronin A."/>
            <person name="Davis P."/>
            <person name="Goodhead I."/>
            <person name="Holroyd N."/>
            <person name="Jagels K."/>
            <person name="Lord A."/>
            <person name="Moule S."/>
            <person name="Mungall K."/>
            <person name="Norbertczak H."/>
            <person name="Quail M.A."/>
            <person name="Rabbinowitsch E."/>
            <person name="Walker D."/>
            <person name="White B."/>
            <person name="Whitehead S."/>
            <person name="Small P.L."/>
            <person name="Brosch R."/>
            <person name="Ramakrishnan L."/>
            <person name="Fischbach M.A."/>
            <person name="Parkhill J."/>
            <person name="Cole S.T."/>
        </authorList>
    </citation>
    <scope>NUCLEOTIDE SEQUENCE [LARGE SCALE GENOMIC DNA]</scope>
    <source>
        <strain>ATCC BAA-535 / M</strain>
    </source>
</reference>
<accession>B2HCT7</accession>
<feature type="chain" id="PRO_1000142692" description="Large ribosomal subunit protein uL18">
    <location>
        <begin position="1"/>
        <end position="135"/>
    </location>
</feature>
<feature type="region of interest" description="Disordered" evidence="2">
    <location>
        <begin position="1"/>
        <end position="23"/>
    </location>
</feature>
<protein>
    <recommendedName>
        <fullName evidence="1">Large ribosomal subunit protein uL18</fullName>
    </recommendedName>
    <alternativeName>
        <fullName evidence="3">50S ribosomal protein L18</fullName>
    </alternativeName>
</protein>
<keyword id="KW-1185">Reference proteome</keyword>
<keyword id="KW-0687">Ribonucleoprotein</keyword>
<keyword id="KW-0689">Ribosomal protein</keyword>
<keyword id="KW-0694">RNA-binding</keyword>
<keyword id="KW-0699">rRNA-binding</keyword>
<comment type="function">
    <text evidence="1">This is one of the proteins that bind and probably mediate the attachment of the 5S RNA into the large ribosomal subunit, where it forms part of the central protuberance.</text>
</comment>
<comment type="subunit">
    <text evidence="1">Part of the 50S ribosomal subunit; part of the 5S rRNA/L5/L18/L25 subcomplex. Contacts the 5S and 23S rRNAs.</text>
</comment>
<comment type="similarity">
    <text evidence="1">Belongs to the universal ribosomal protein uL18 family.</text>
</comment>
<dbReference type="EMBL" id="CP000854">
    <property type="protein sequence ID" value="ACC39509.1"/>
    <property type="molecule type" value="Genomic_DNA"/>
</dbReference>
<dbReference type="SMR" id="B2HCT7"/>
<dbReference type="STRING" id="216594.MMAR_1051"/>
<dbReference type="KEGG" id="mmi:MMAR_1051"/>
<dbReference type="eggNOG" id="COG0256">
    <property type="taxonomic scope" value="Bacteria"/>
</dbReference>
<dbReference type="HOGENOM" id="CLU_098841_0_1_11"/>
<dbReference type="Proteomes" id="UP000001190">
    <property type="component" value="Chromosome"/>
</dbReference>
<dbReference type="GO" id="GO:0022625">
    <property type="term" value="C:cytosolic large ribosomal subunit"/>
    <property type="evidence" value="ECO:0007669"/>
    <property type="project" value="TreeGrafter"/>
</dbReference>
<dbReference type="GO" id="GO:0008097">
    <property type="term" value="F:5S rRNA binding"/>
    <property type="evidence" value="ECO:0007669"/>
    <property type="project" value="TreeGrafter"/>
</dbReference>
<dbReference type="GO" id="GO:0003735">
    <property type="term" value="F:structural constituent of ribosome"/>
    <property type="evidence" value="ECO:0007669"/>
    <property type="project" value="InterPro"/>
</dbReference>
<dbReference type="GO" id="GO:0006412">
    <property type="term" value="P:translation"/>
    <property type="evidence" value="ECO:0007669"/>
    <property type="project" value="UniProtKB-UniRule"/>
</dbReference>
<dbReference type="CDD" id="cd00432">
    <property type="entry name" value="Ribosomal_L18_L5e"/>
    <property type="match status" value="1"/>
</dbReference>
<dbReference type="FunFam" id="3.30.420.100:FF:000001">
    <property type="entry name" value="50S ribosomal protein L18"/>
    <property type="match status" value="1"/>
</dbReference>
<dbReference type="Gene3D" id="3.30.420.100">
    <property type="match status" value="1"/>
</dbReference>
<dbReference type="HAMAP" id="MF_01337_B">
    <property type="entry name" value="Ribosomal_uL18_B"/>
    <property type="match status" value="1"/>
</dbReference>
<dbReference type="InterPro" id="IPR004389">
    <property type="entry name" value="Ribosomal_uL18_bac-type"/>
</dbReference>
<dbReference type="InterPro" id="IPR005484">
    <property type="entry name" value="Ribosomal_uL18_bac/euk"/>
</dbReference>
<dbReference type="NCBIfam" id="TIGR00060">
    <property type="entry name" value="L18_bact"/>
    <property type="match status" value="1"/>
</dbReference>
<dbReference type="PANTHER" id="PTHR12899">
    <property type="entry name" value="39S RIBOSOMAL PROTEIN L18, MITOCHONDRIAL"/>
    <property type="match status" value="1"/>
</dbReference>
<dbReference type="PANTHER" id="PTHR12899:SF3">
    <property type="entry name" value="LARGE RIBOSOMAL SUBUNIT PROTEIN UL18M"/>
    <property type="match status" value="1"/>
</dbReference>
<dbReference type="Pfam" id="PF00861">
    <property type="entry name" value="Ribosomal_L18p"/>
    <property type="match status" value="1"/>
</dbReference>
<dbReference type="SUPFAM" id="SSF53137">
    <property type="entry name" value="Translational machinery components"/>
    <property type="match status" value="1"/>
</dbReference>
<gene>
    <name evidence="1" type="primary">rplR</name>
    <name type="ordered locus">MMAR_1051</name>
</gene>
<name>RL18_MYCMM</name>
<sequence>MAQTQADTAARKPVGQSVSATRRVSRLRRHARLRKRIAGTQQRPRLVVHRSARHIHVQLVNDANGTTVAAASSIETDVRGLDGDKKARSVRVGQLIAERAKAAGIDTVVFDRGGYTYGGRIAALADAARENGLKF</sequence>